<organism>
    <name type="scientific">Macaca fascicularis</name>
    <name type="common">Crab-eating macaque</name>
    <name type="synonym">Cynomolgus monkey</name>
    <dbReference type="NCBI Taxonomy" id="9541"/>
    <lineage>
        <taxon>Eukaryota</taxon>
        <taxon>Metazoa</taxon>
        <taxon>Chordata</taxon>
        <taxon>Craniata</taxon>
        <taxon>Vertebrata</taxon>
        <taxon>Euteleostomi</taxon>
        <taxon>Mammalia</taxon>
        <taxon>Eutheria</taxon>
        <taxon>Euarchontoglires</taxon>
        <taxon>Primates</taxon>
        <taxon>Haplorrhini</taxon>
        <taxon>Catarrhini</taxon>
        <taxon>Cercopithecidae</taxon>
        <taxon>Cercopithecinae</taxon>
        <taxon>Macaca</taxon>
    </lineage>
</organism>
<accession>A0A2K5X3B6</accession>
<sequence>TALHKMEDFTFDGTKRLSVNYVKGILQPTVTCDIWDEIWNFQAKPDDLLISTYPKAGTTWTQEIVELIQNEGDVEKSKRAPTHQRFPFLEWKIPSLGSGLEQAQAMPSPRILKTHLPFHLLPPSFLEKNCKIIYVARNPKDNMVSYYHFQRMNKALPDPGTWEEYFETFLAGKVCWGSWHEHVKGWWEAKDKHRILYLFYEDMKKNPKHEVQKLTEFIEKKLDDKVLDKIVHYTSFDVMKQNSMANYSSIPAEIMDHSISPFMRKGAVGDWKKHFTVAQNERFDEDYKKKMADTRLTFHFQF</sequence>
<keyword id="KW-0963">Cytoplasm</keyword>
<keyword id="KW-1185">Reference proteome</keyword>
<keyword id="KW-0808">Transferase</keyword>
<protein>
    <recommendedName>
        <fullName>Sulfotransferase 1C4</fullName>
        <shortName>ST1C4</shortName>
        <ecNumber evidence="3">2.8.2.1</ecNumber>
    </recommendedName>
</protein>
<evidence type="ECO:0000250" key="1"/>
<evidence type="ECO:0000250" key="2">
    <source>
        <dbReference type="UniProtKB" id="O75897"/>
    </source>
</evidence>
<evidence type="ECO:0000269" key="3">
    <source>
    </source>
</evidence>
<evidence type="ECO:0000305" key="4"/>
<evidence type="ECO:0000305" key="5">
    <source>
    </source>
</evidence>
<comment type="function">
    <text evidence="2 3">Sulfotransferase that utilizes 3'-phospho-5'-adenylyl sulfate (PAPS) as sulfonate donor to catalyze the sulfate conjugation of phenolic compounds and estrogen (E2) (PubMed:31100221). Can also sulfonate estrogenic compounds, however, the dietary flavonoids (phytoestrogen) and environmental estrogens, like bisphenol A are better substrates than 17beta-estradiol (E2) (By similarity).</text>
</comment>
<comment type="catalytic activity">
    <reaction evidence="3">
        <text>a phenol + 3'-phosphoadenylyl sulfate = an aryl sulfate + adenosine 3',5'-bisphosphate + H(+)</text>
        <dbReference type="Rhea" id="RHEA:12164"/>
        <dbReference type="ChEBI" id="CHEBI:15378"/>
        <dbReference type="ChEBI" id="CHEBI:33853"/>
        <dbReference type="ChEBI" id="CHEBI:58339"/>
        <dbReference type="ChEBI" id="CHEBI:58343"/>
        <dbReference type="ChEBI" id="CHEBI:140317"/>
        <dbReference type="EC" id="2.8.2.1"/>
    </reaction>
    <physiologicalReaction direction="left-to-right" evidence="5">
        <dbReference type="Rhea" id="RHEA:12165"/>
    </physiologicalReaction>
</comment>
<comment type="catalytic activity">
    <reaction evidence="3">
        <text>17beta-estradiol + 3'-phosphoadenylyl sulfate = 17beta-estradiol 3-sulfate + adenosine 3',5'-bisphosphate + H(+)</text>
        <dbReference type="Rhea" id="RHEA:52372"/>
        <dbReference type="ChEBI" id="CHEBI:15378"/>
        <dbReference type="ChEBI" id="CHEBI:16469"/>
        <dbReference type="ChEBI" id="CHEBI:58339"/>
        <dbReference type="ChEBI" id="CHEBI:58343"/>
        <dbReference type="ChEBI" id="CHEBI:136582"/>
    </reaction>
    <physiologicalReaction direction="left-to-right" evidence="5">
        <dbReference type="Rhea" id="RHEA:52373"/>
    </physiologicalReaction>
</comment>
<comment type="catalytic activity">
    <reaction evidence="2">
        <text>bisphenol A + 3'-phosphoadenylyl sulfate = bisphenyl A sulfate + adenosine 3',5'-bisphosphate + H(+)</text>
        <dbReference type="Rhea" id="RHEA:66580"/>
        <dbReference type="ChEBI" id="CHEBI:15378"/>
        <dbReference type="ChEBI" id="CHEBI:33216"/>
        <dbReference type="ChEBI" id="CHEBI:58339"/>
        <dbReference type="ChEBI" id="CHEBI:58343"/>
        <dbReference type="ChEBI" id="CHEBI:167171"/>
    </reaction>
    <physiologicalReaction direction="left-to-right" evidence="2">
        <dbReference type="Rhea" id="RHEA:66581"/>
    </physiologicalReaction>
</comment>
<comment type="subcellular location">
    <subcellularLocation>
        <location evidence="3">Cytoplasm</location>
        <location evidence="3">Cytosol</location>
    </subcellularLocation>
</comment>
<comment type="tissue specificity">
    <text evidence="3">Expressed in liver, kidney and jejunum.</text>
</comment>
<comment type="similarity">
    <text evidence="4">Belongs to the sulfotransferase 1 family.</text>
</comment>
<dbReference type="EC" id="2.8.2.1" evidence="3"/>
<dbReference type="EMBL" id="AQIA01016952">
    <property type="status" value="NOT_ANNOTATED_CDS"/>
    <property type="molecule type" value="Genomic_DNA"/>
</dbReference>
<dbReference type="SMR" id="A0A2K5X3B6"/>
<dbReference type="STRING" id="9541.ENSMFAP00000043917"/>
<dbReference type="Ensembl" id="ENSMFAT00000073312.1">
    <property type="protein sequence ID" value="ENSMFAP00000060137.1"/>
    <property type="gene ID" value="ENSMFAG00000039337.2"/>
</dbReference>
<dbReference type="VEuPathDB" id="HostDB:ENSMFAG00000039337"/>
<dbReference type="OMA" id="EQANTMP"/>
<dbReference type="BRENDA" id="2.8.2.2">
    <property type="organism ID" value="1793"/>
</dbReference>
<dbReference type="Proteomes" id="UP000233100">
    <property type="component" value="Chromosome 13"/>
</dbReference>
<dbReference type="Bgee" id="ENSMFAG00000039337">
    <property type="expression patterns" value="Expressed in liver and 10 other cell types or tissues"/>
</dbReference>
<dbReference type="GO" id="GO:0005829">
    <property type="term" value="C:cytosol"/>
    <property type="evidence" value="ECO:0000314"/>
    <property type="project" value="UniProtKB"/>
</dbReference>
<dbReference type="GO" id="GO:0004062">
    <property type="term" value="F:aryl sulfotransferase activity"/>
    <property type="evidence" value="ECO:0000314"/>
    <property type="project" value="UniProtKB"/>
</dbReference>
<dbReference type="GO" id="GO:0008146">
    <property type="term" value="F:sulfotransferase activity"/>
    <property type="evidence" value="ECO:0000314"/>
    <property type="project" value="UniProtKB"/>
</dbReference>
<dbReference type="GO" id="GO:0050427">
    <property type="term" value="P:3'-phosphoadenosine 5'-phosphosulfate metabolic process"/>
    <property type="evidence" value="ECO:0000314"/>
    <property type="project" value="UniProtKB"/>
</dbReference>
<dbReference type="GO" id="GO:0009812">
    <property type="term" value="P:flavonoid metabolic process"/>
    <property type="evidence" value="ECO:0000250"/>
    <property type="project" value="UniProtKB"/>
</dbReference>
<dbReference type="FunFam" id="3.40.50.300:FF:000433">
    <property type="entry name" value="Estrogen sulfotransferase"/>
    <property type="match status" value="1"/>
</dbReference>
<dbReference type="Gene3D" id="3.40.50.300">
    <property type="entry name" value="P-loop containing nucleotide triphosphate hydrolases"/>
    <property type="match status" value="1"/>
</dbReference>
<dbReference type="InterPro" id="IPR027417">
    <property type="entry name" value="P-loop_NTPase"/>
</dbReference>
<dbReference type="InterPro" id="IPR000863">
    <property type="entry name" value="Sulfotransferase_dom"/>
</dbReference>
<dbReference type="PANTHER" id="PTHR11783">
    <property type="entry name" value="SULFOTRANSFERASE SULT"/>
    <property type="match status" value="1"/>
</dbReference>
<dbReference type="Pfam" id="PF00685">
    <property type="entry name" value="Sulfotransfer_1"/>
    <property type="match status" value="1"/>
</dbReference>
<dbReference type="SUPFAM" id="SSF52540">
    <property type="entry name" value="P-loop containing nucleoside triphosphate hydrolases"/>
    <property type="match status" value="1"/>
</dbReference>
<name>ST1C4_MACFA</name>
<feature type="chain" id="PRO_0000453622" description="Sulfotransferase 1C4">
    <location>
        <begin position="1"/>
        <end position="302"/>
    </location>
</feature>
<feature type="active site" description="Proton acceptor" evidence="1">
    <location>
        <position position="115"/>
    </location>
</feature>
<feature type="binding site" evidence="2">
    <location>
        <begin position="55"/>
        <end position="60"/>
    </location>
    <ligand>
        <name>3'-phosphoadenylyl sulfate</name>
        <dbReference type="ChEBI" id="CHEBI:58339"/>
    </ligand>
</feature>
<feature type="binding site" evidence="1">
    <location>
        <begin position="113"/>
        <end position="115"/>
    </location>
    <ligand>
        <name>substrate</name>
    </ligand>
</feature>
<feature type="binding site" evidence="2">
    <location>
        <position position="137"/>
    </location>
    <ligand>
        <name>3'-phosphoadenylyl sulfate</name>
        <dbReference type="ChEBI" id="CHEBI:58339"/>
    </ligand>
</feature>
<feature type="binding site" evidence="2">
    <location>
        <position position="145"/>
    </location>
    <ligand>
        <name>3'-phosphoadenylyl sulfate</name>
        <dbReference type="ChEBI" id="CHEBI:58339"/>
    </ligand>
</feature>
<feature type="binding site" evidence="2">
    <location>
        <position position="200"/>
    </location>
    <ligand>
        <name>3'-phosphoadenylyl sulfate</name>
        <dbReference type="ChEBI" id="CHEBI:58339"/>
    </ligand>
</feature>
<feature type="binding site" evidence="2">
    <location>
        <begin position="234"/>
        <end position="239"/>
    </location>
    <ligand>
        <name>3'-phosphoadenylyl sulfate</name>
        <dbReference type="ChEBI" id="CHEBI:58339"/>
    </ligand>
</feature>
<feature type="binding site" evidence="2">
    <location>
        <begin position="262"/>
        <end position="266"/>
    </location>
    <ligand>
        <name>3'-phosphoadenylyl sulfate</name>
        <dbReference type="ChEBI" id="CHEBI:58339"/>
    </ligand>
</feature>
<gene>
    <name type="primary">SULT1C4</name>
</gene>
<reference key="1">
    <citation type="submission" date="2013-03" db="EMBL/GenBank/DDBJ databases">
        <authorList>
            <person name="Warren W."/>
            <person name="Wilson R.K."/>
        </authorList>
    </citation>
    <scope>NUCLEOTIDE SEQUENCE [GENOMIC DNA]</scope>
</reference>
<reference key="2">
    <citation type="journal article" date="2019" name="Biochem. Pharmacol.">
        <title>Molecular and functional characterization of cytosolic sulfotransferases in cynomolgus macaque.</title>
        <authorList>
            <person name="Uno Y."/>
            <person name="Murayama N."/>
            <person name="Yamazaki H."/>
        </authorList>
    </citation>
    <scope>FUNCTION</scope>
    <scope>CATALYTIC ACTIVITY</scope>
    <scope>TISSUE SPECIFICITY</scope>
    <scope>SUBCELLULAR LOCATION</scope>
</reference>
<proteinExistence type="evidence at protein level"/>